<evidence type="ECO:0000250" key="1"/>
<evidence type="ECO:0000255" key="2"/>
<evidence type="ECO:0000255" key="3">
    <source>
        <dbReference type="PROSITE-ProRule" id="PRU00276"/>
    </source>
</evidence>
<evidence type="ECO:0000255" key="4">
    <source>
        <dbReference type="PROSITE-ProRule" id="PRU10095"/>
    </source>
</evidence>
<evidence type="ECO:0000305" key="5"/>
<comment type="function">
    <text evidence="1">Snake venom metalloproteinase that impairs hemostasis in the envenomed animal.</text>
</comment>
<comment type="cofactor">
    <cofactor evidence="1">
        <name>Zn(2+)</name>
        <dbReference type="ChEBI" id="CHEBI:29105"/>
    </cofactor>
    <text evidence="1">Binds 1 zinc ion per subunit.</text>
</comment>
<comment type="subunit">
    <text evidence="1">Monomer.</text>
</comment>
<comment type="subcellular location">
    <subcellularLocation>
        <location evidence="1">Secreted</location>
    </subcellularLocation>
</comment>
<comment type="tissue specificity">
    <text>Expressed by the venom gland.</text>
</comment>
<comment type="similarity">
    <text evidence="5">Belongs to the venom metalloproteinase (M12B) family. P-I subfamily.</text>
</comment>
<keyword id="KW-0106">Calcium</keyword>
<keyword id="KW-1015">Disulfide bond</keyword>
<keyword id="KW-1199">Hemostasis impairing toxin</keyword>
<keyword id="KW-0378">Hydrolase</keyword>
<keyword id="KW-0479">Metal-binding</keyword>
<keyword id="KW-0482">Metalloprotease</keyword>
<keyword id="KW-0645">Protease</keyword>
<keyword id="KW-0964">Secreted</keyword>
<keyword id="KW-0732">Signal</keyword>
<keyword id="KW-0800">Toxin</keyword>
<keyword id="KW-0862">Zinc</keyword>
<keyword id="KW-0865">Zymogen</keyword>
<protein>
    <recommendedName>
        <fullName>Snake venom metalloproteinase H2</fullName>
        <shortName>SVMP</shortName>
        <ecNumber>3.4.24.-</ecNumber>
    </recommendedName>
</protein>
<accession>Q9IAY1</accession>
<dbReference type="EC" id="3.4.24.-"/>
<dbReference type="EMBL" id="AF099085">
    <property type="protein sequence ID" value="AAF61186.1"/>
    <property type="molecule type" value="mRNA"/>
</dbReference>
<dbReference type="SMR" id="Q9IAY1"/>
<dbReference type="MEROPS" id="M12.131"/>
<dbReference type="GO" id="GO:0005576">
    <property type="term" value="C:extracellular region"/>
    <property type="evidence" value="ECO:0007669"/>
    <property type="project" value="UniProtKB-SubCell"/>
</dbReference>
<dbReference type="GO" id="GO:0005886">
    <property type="term" value="C:plasma membrane"/>
    <property type="evidence" value="ECO:0007669"/>
    <property type="project" value="TreeGrafter"/>
</dbReference>
<dbReference type="GO" id="GO:0046872">
    <property type="term" value="F:metal ion binding"/>
    <property type="evidence" value="ECO:0007669"/>
    <property type="project" value="UniProtKB-KW"/>
</dbReference>
<dbReference type="GO" id="GO:0004222">
    <property type="term" value="F:metalloendopeptidase activity"/>
    <property type="evidence" value="ECO:0007669"/>
    <property type="project" value="InterPro"/>
</dbReference>
<dbReference type="GO" id="GO:0090729">
    <property type="term" value="F:toxin activity"/>
    <property type="evidence" value="ECO:0007669"/>
    <property type="project" value="UniProtKB-KW"/>
</dbReference>
<dbReference type="GO" id="GO:0006508">
    <property type="term" value="P:proteolysis"/>
    <property type="evidence" value="ECO:0007669"/>
    <property type="project" value="UniProtKB-KW"/>
</dbReference>
<dbReference type="CDD" id="cd04269">
    <property type="entry name" value="ZnMc_adamalysin_II_like"/>
    <property type="match status" value="1"/>
</dbReference>
<dbReference type="FunFam" id="3.40.390.10:FF:000002">
    <property type="entry name" value="Disintegrin and metalloproteinase domain-containing protein 22"/>
    <property type="match status" value="1"/>
</dbReference>
<dbReference type="Gene3D" id="3.40.390.10">
    <property type="entry name" value="Collagenase (Catalytic Domain)"/>
    <property type="match status" value="1"/>
</dbReference>
<dbReference type="InterPro" id="IPR024079">
    <property type="entry name" value="MetalloPept_cat_dom_sf"/>
</dbReference>
<dbReference type="InterPro" id="IPR001590">
    <property type="entry name" value="Peptidase_M12B"/>
</dbReference>
<dbReference type="InterPro" id="IPR002870">
    <property type="entry name" value="Peptidase_M12B_N"/>
</dbReference>
<dbReference type="InterPro" id="IPR034027">
    <property type="entry name" value="Reprolysin_adamalysin"/>
</dbReference>
<dbReference type="PANTHER" id="PTHR11905">
    <property type="entry name" value="ADAM A DISINTEGRIN AND METALLOPROTEASE DOMAIN"/>
    <property type="match status" value="1"/>
</dbReference>
<dbReference type="PANTHER" id="PTHR11905:SF32">
    <property type="entry name" value="DISINTEGRIN AND METALLOPROTEINASE DOMAIN-CONTAINING PROTEIN 28"/>
    <property type="match status" value="1"/>
</dbReference>
<dbReference type="Pfam" id="PF01562">
    <property type="entry name" value="Pep_M12B_propep"/>
    <property type="match status" value="1"/>
</dbReference>
<dbReference type="Pfam" id="PF01421">
    <property type="entry name" value="Reprolysin"/>
    <property type="match status" value="1"/>
</dbReference>
<dbReference type="SUPFAM" id="SSF55486">
    <property type="entry name" value="Metalloproteases ('zincins'), catalytic domain"/>
    <property type="match status" value="1"/>
</dbReference>
<dbReference type="PROSITE" id="PS50215">
    <property type="entry name" value="ADAM_MEPRO"/>
    <property type="match status" value="1"/>
</dbReference>
<dbReference type="PROSITE" id="PS00142">
    <property type="entry name" value="ZINC_PROTEASE"/>
    <property type="match status" value="1"/>
</dbReference>
<proteinExistence type="evidence at transcript level"/>
<sequence length="400" mass="45323">FPYQGSSTILESGNVNDYEVVYPRKVTALPKGAVQQKYEDAMQYEFKVNGEPVVLHLEKNKGLFSKDYSEIHYSPDGRRITTHPLVEDHCYYRGHIRNDADSTASISACNGLKGHFKLRGETYLIEPMKISNSEAHAVYKYENVEKEDEAHKMCGVTQNWESYEPIKKASQLIVSTEFQRYMEIVIVVDHSMYTKYKGDSDKIKAWVYEMINTISESYRYLYIDIIVSALEMWSEKDLINVETSAENTLKSFGEWRAKDLIHRISHDNAQLLTATDFDGPTIGLAYVASMCDPKRSVGVVQDHSSVNHLVAITLAHEIAHNLGVHHDKSSCSCGSGYTCIMSPVINSEVIKYFSDCSYIQCREYISKENPPCILNKPLRTDTVSTPVSGNELLEAGKDYD</sequence>
<name>VM1H2_DEIAC</name>
<organism>
    <name type="scientific">Deinagkistrodon acutus</name>
    <name type="common">Hundred-pace snake</name>
    <name type="synonym">Agkistrodon acutus</name>
    <dbReference type="NCBI Taxonomy" id="36307"/>
    <lineage>
        <taxon>Eukaryota</taxon>
        <taxon>Metazoa</taxon>
        <taxon>Chordata</taxon>
        <taxon>Craniata</taxon>
        <taxon>Vertebrata</taxon>
        <taxon>Euteleostomi</taxon>
        <taxon>Lepidosauria</taxon>
        <taxon>Squamata</taxon>
        <taxon>Bifurcata</taxon>
        <taxon>Unidentata</taxon>
        <taxon>Episquamata</taxon>
        <taxon>Toxicofera</taxon>
        <taxon>Serpentes</taxon>
        <taxon>Colubroidea</taxon>
        <taxon>Viperidae</taxon>
        <taxon>Crotalinae</taxon>
        <taxon>Deinagkistrodon</taxon>
    </lineage>
</organism>
<feature type="signal peptide" evidence="2">
    <location>
        <begin position="1" status="less than"/>
        <end position="6"/>
    </location>
</feature>
<feature type="propeptide" id="PRO_0000322617" evidence="1">
    <location>
        <begin position="7"/>
        <end position="176"/>
    </location>
</feature>
<feature type="chain" id="PRO_5000055271" description="Snake venom metalloproteinase H2">
    <location>
        <begin position="177"/>
        <end position="377"/>
    </location>
</feature>
<feature type="propeptide" id="PRO_0000322618" evidence="1">
    <location>
        <begin position="378"/>
        <end position="400"/>
    </location>
</feature>
<feature type="domain" description="Peptidase M12B" evidence="3">
    <location>
        <begin position="180"/>
        <end position="377"/>
    </location>
</feature>
<feature type="active site" evidence="3 4">
    <location>
        <position position="317"/>
    </location>
</feature>
<feature type="binding site" evidence="1">
    <location>
        <position position="183"/>
    </location>
    <ligand>
        <name>Ca(2+)</name>
        <dbReference type="ChEBI" id="CHEBI:29108"/>
        <label>1</label>
    </ligand>
</feature>
<feature type="binding site" evidence="1">
    <location>
        <position position="267"/>
    </location>
    <ligand>
        <name>Ca(2+)</name>
        <dbReference type="ChEBI" id="CHEBI:29108"/>
        <label>1</label>
    </ligand>
</feature>
<feature type="binding site" evidence="1">
    <location>
        <position position="316"/>
    </location>
    <ligand>
        <name>Zn(2+)</name>
        <dbReference type="ChEBI" id="CHEBI:29105"/>
        <note>catalytic</note>
    </ligand>
</feature>
<feature type="binding site" evidence="1">
    <location>
        <position position="320"/>
    </location>
    <ligand>
        <name>Zn(2+)</name>
        <dbReference type="ChEBI" id="CHEBI:29105"/>
        <note>catalytic</note>
    </ligand>
</feature>
<feature type="binding site" evidence="1">
    <location>
        <position position="326"/>
    </location>
    <ligand>
        <name>Zn(2+)</name>
        <dbReference type="ChEBI" id="CHEBI:29105"/>
        <note>catalytic</note>
    </ligand>
</feature>
<feature type="binding site" evidence="1">
    <location>
        <position position="372"/>
    </location>
    <ligand>
        <name>Ca(2+)</name>
        <dbReference type="ChEBI" id="CHEBI:29108"/>
        <label>1</label>
    </ligand>
</feature>
<feature type="binding site" evidence="1">
    <location>
        <position position="375"/>
    </location>
    <ligand>
        <name>Ca(2+)</name>
        <dbReference type="ChEBI" id="CHEBI:29108"/>
        <label>1</label>
    </ligand>
</feature>
<feature type="binding site" evidence="1">
    <location>
        <position position="387"/>
    </location>
    <ligand>
        <name>Ca(2+)</name>
        <dbReference type="ChEBI" id="CHEBI:29108"/>
        <label>2</label>
    </ligand>
</feature>
<feature type="binding site" evidence="1">
    <location>
        <position position="390"/>
    </location>
    <ligand>
        <name>Ca(2+)</name>
        <dbReference type="ChEBI" id="CHEBI:29108"/>
        <label>2</label>
    </ligand>
</feature>
<feature type="binding site" evidence="1">
    <location>
        <position position="392"/>
    </location>
    <ligand>
        <name>Ca(2+)</name>
        <dbReference type="ChEBI" id="CHEBI:29108"/>
        <label>2</label>
    </ligand>
</feature>
<feature type="binding site" evidence="1">
    <location>
        <position position="394"/>
    </location>
    <ligand>
        <name>Ca(2+)</name>
        <dbReference type="ChEBI" id="CHEBI:29108"/>
        <label>2</label>
    </ligand>
</feature>
<feature type="binding site" evidence="1">
    <location>
        <position position="400"/>
    </location>
    <ligand>
        <name>Ca(2+)</name>
        <dbReference type="ChEBI" id="CHEBI:29108"/>
        <label>2</label>
    </ligand>
</feature>
<feature type="disulfide bond" evidence="3">
    <location>
        <begin position="291"/>
        <end position="372"/>
    </location>
</feature>
<feature type="disulfide bond" evidence="3">
    <location>
        <begin position="331"/>
        <end position="356"/>
    </location>
</feature>
<feature type="disulfide bond" evidence="3">
    <location>
        <begin position="333"/>
        <end position="339"/>
    </location>
</feature>
<feature type="non-terminal residue">
    <location>
        <position position="1"/>
    </location>
</feature>
<reference key="1">
    <citation type="journal article" date="2000" name="Eur. J. Biochem.">
        <title>Purification, cloning and sequence analyses for pro-metalloprotease-disintegrin variants from Deinagkistrodon acutus venom and subclassification of the small venom metalloproteases.</title>
        <authorList>
            <person name="Tsai I.-H."/>
            <person name="Wang Y.-M."/>
            <person name="Chiang T.-Y."/>
            <person name="Chen Y.-L."/>
            <person name="Huang R.-J."/>
        </authorList>
    </citation>
    <scope>NUCLEOTIDE SEQUENCE [MRNA]</scope>
    <source>
        <tissue>Venom gland</tissue>
    </source>
</reference>